<keyword id="KW-0010">Activator</keyword>
<keyword id="KW-0067">ATP-binding</keyword>
<keyword id="KW-0235">DNA replication</keyword>
<keyword id="KW-0238">DNA-binding</keyword>
<keyword id="KW-0547">Nucleotide-binding</keyword>
<keyword id="KW-0539">Nucleus</keyword>
<keyword id="KW-0597">Phosphoprotein</keyword>
<keyword id="KW-1185">Reference proteome</keyword>
<keyword id="KW-0804">Transcription</keyword>
<keyword id="KW-0805">Transcription regulation</keyword>
<proteinExistence type="evidence at protein level"/>
<feature type="chain" id="PRO_0000121774" description="Replication factor C subunit 1">
    <location>
        <begin position="1"/>
        <end position="986"/>
    </location>
</feature>
<feature type="domain" description="BRCT" evidence="3">
    <location>
        <begin position="232"/>
        <end position="322"/>
    </location>
</feature>
<feature type="region of interest" description="Disordered" evidence="4">
    <location>
        <begin position="1"/>
        <end position="95"/>
    </location>
</feature>
<feature type="region of interest" description="Disordered" evidence="4">
    <location>
        <begin position="136"/>
        <end position="203"/>
    </location>
</feature>
<feature type="region of interest" description="Disordered" evidence="4">
    <location>
        <begin position="317"/>
        <end position="388"/>
    </location>
</feature>
<feature type="region of interest" description="Disordered" evidence="4">
    <location>
        <begin position="913"/>
        <end position="986"/>
    </location>
</feature>
<feature type="short sequence motif" description="Nuclear localization signal" evidence="2">
    <location>
        <begin position="955"/>
        <end position="959"/>
    </location>
</feature>
<feature type="compositionally biased region" description="Basic and acidic residues" evidence="4">
    <location>
        <begin position="136"/>
        <end position="147"/>
    </location>
</feature>
<feature type="compositionally biased region" description="Basic and acidic residues" evidence="4">
    <location>
        <begin position="317"/>
        <end position="364"/>
    </location>
</feature>
<feature type="compositionally biased region" description="Basic and acidic residues" evidence="4">
    <location>
        <begin position="370"/>
        <end position="385"/>
    </location>
</feature>
<feature type="compositionally biased region" description="Acidic residues" evidence="4">
    <location>
        <begin position="917"/>
        <end position="932"/>
    </location>
</feature>
<feature type="compositionally biased region" description="Low complexity" evidence="4">
    <location>
        <begin position="962"/>
        <end position="979"/>
    </location>
</feature>
<feature type="binding site" evidence="1">
    <location>
        <begin position="487"/>
        <end position="494"/>
    </location>
    <ligand>
        <name>ATP</name>
        <dbReference type="ChEBI" id="CHEBI:30616"/>
    </ligand>
</feature>
<feature type="modified residue" description="Phosphoserine" evidence="5">
    <location>
        <position position="18"/>
    </location>
</feature>
<feature type="modified residue" description="Phosphoserine" evidence="5">
    <location>
        <position position="28"/>
    </location>
</feature>
<feature type="modified residue" description="Phosphoserine" evidence="5">
    <location>
        <position position="40"/>
    </location>
</feature>
<feature type="modified residue" description="Phosphoserine" evidence="5">
    <location>
        <position position="41"/>
    </location>
</feature>
<feature type="modified residue" description="Phosphoserine" evidence="5">
    <location>
        <position position="48"/>
    </location>
</feature>
<feature type="modified residue" description="Phosphoserine" evidence="5">
    <location>
        <position position="58"/>
    </location>
</feature>
<feature type="modified residue" description="Phosphothreonine" evidence="5">
    <location>
        <position position="60"/>
    </location>
</feature>
<feature type="modified residue" description="Phosphoserine" evidence="5">
    <location>
        <position position="62"/>
    </location>
</feature>
<feature type="modified residue" description="Phosphoserine" evidence="5">
    <location>
        <position position="63"/>
    </location>
</feature>
<feature type="modified residue" description="Phosphothreonine" evidence="5">
    <location>
        <position position="71"/>
    </location>
</feature>
<feature type="modified residue" description="Phosphoserine" evidence="5">
    <location>
        <position position="128"/>
    </location>
</feature>
<feature type="modified residue" description="Phosphoserine" evidence="5">
    <location>
        <position position="137"/>
    </location>
</feature>
<feature type="modified residue" description="Phosphoserine" evidence="5">
    <location>
        <position position="149"/>
    </location>
</feature>
<feature type="modified residue" description="Phosphoserine" evidence="5">
    <location>
        <position position="154"/>
    </location>
</feature>
<feature type="modified residue" description="Phosphoserine" evidence="5">
    <location>
        <position position="156"/>
    </location>
</feature>
<feature type="modified residue" description="Phosphoserine" evidence="5">
    <location>
        <position position="164"/>
    </location>
</feature>
<feature type="modified residue" description="Phosphoserine" evidence="5">
    <location>
        <position position="194"/>
    </location>
</feature>
<feature type="modified residue" description="Phosphothreonine" evidence="5">
    <location>
        <position position="197"/>
    </location>
</feature>
<feature type="modified residue" description="Phosphoserine" evidence="5">
    <location>
        <position position="938"/>
    </location>
</feature>
<feature type="modified residue" description="Phosphoserine" evidence="5">
    <location>
        <position position="939"/>
    </location>
</feature>
<feature type="sequence conflict" description="In Ref. 5; AAM52589." evidence="7" ref="5">
    <original>K</original>
    <variation>NHNLKLKAKQERVKVLHYFNFPR</variation>
    <location>
        <position position="447"/>
    </location>
</feature>
<feature type="sequence conflict" description="In Ref. 2; AAA28573." evidence="7" ref="2">
    <original>G</original>
    <variation>A</variation>
    <location>
        <position position="559"/>
    </location>
</feature>
<sequence length="986" mass="108615">MQRGIDSFFKRLPAKAKSAEAENGETPSKAPKRRKAVIISSDEDEVVSPPETKKRKASKTASSEDDVVAATPEPIAKKARNGQKPALSKLKRHVDPTELFGGETKRVIVPKPKTKAVLEFENEDIDRSLMEVDLDESIKEAAPEKKVHSITRSSPSPKRAKNSSPEPPKPKSTKSKATTPRVKKEKPAADLESSVLTDEERHERKRASAVLYQKYKNRSSCLNPGSKEIPKGSPDCLSGLTFVVTGVLESMEREEAESVIKEYGGKVMTVVGKKLKYLVVGEEAGPKKLAVAEELNIPILSEDGLFDLIREKSGIAKQVKEEKKSPKKEHSSEEKGKKEVKTSRRSSDKKEKEATKLKYGEKHDIAKHKVKEEHTSPKETKDKLNDVPAVTLKVKKEPSSQKEHPPSPRTADLKTLDVVGMAWVDKHKPTSIKEIVGQAGAASNVTKLMNWLSKWYVNHDGNKKPQRPNPWAKNDDGSFYKAALLSGPPGIGKTTTATLVVKELGFDAVEFNASDTRSKRLLKDEVSTLLSNKSLSGYFTGQGQAVSRKHVLIMDEVDGMAGNEDRGGMQELIALIKDSSIPIICMCNDRNHPKIRSLVNYCYDLRFQRPRLEQIKGKIMSICFKEKVKISPAKVEEIIAATNNDIRQSINHIALLSAKEDASQKSGQQVATKDLKLGPWEVVRKVFTADEHKHMSFADKSDLFFHDYSLAPLFVQQNYLQVLPQGNKKDVLAKVAATADALSLGDLVEKRIRANSAWSLLPTQAFFSSVLPGEHMCGHFTGQINFPGWLGKNSKSGKRARLAQELHDHTRVCTSGSRLSVRLDYAPFLLDNIVRPLAKDGQEGVPAALDVMKDYHLLREDLDSLVELTSWPGKKSPLDAVDGRVKAALTRSYNKEVMAYSYSAQAGIKKKKSEAAGADDDYLDEGPGEEDGAGGHLSSEEDEDKDNLELDSLIKAKKRTTTSKASGGSKKATSSTASKSKAKAKK</sequence>
<reference key="1">
    <citation type="submission" date="1993-06" db="EMBL/GenBank/DDBJ databases">
        <title>Cloning and characterization of a putative transcription factor active during oogenesis and embryogenesis.</title>
        <authorList>
            <person name="Frank L.H."/>
            <person name="Cohen R.S."/>
        </authorList>
    </citation>
    <scope>NUCLEOTIDE SEQUENCE [GENOMIC DNA]</scope>
</reference>
<reference key="2">
    <citation type="journal article" date="1998" name="Nucleic Acids Res.">
        <title>DNA recognition properties of the N-terminal DNA binding domain within the large subunit of replication factor C.</title>
        <authorList>
            <person name="Allen B.L."/>
            <person name="Uhlmann F."/>
            <person name="Gaur L.K."/>
            <person name="Mulder B.A."/>
            <person name="Posey K.L."/>
            <person name="Jones L.B."/>
            <person name="Hardin S.H."/>
        </authorList>
    </citation>
    <scope>NUCLEOTIDE SEQUENCE [MRNA]</scope>
    <scope>DNA-BINDING ACTIVITY</scope>
</reference>
<reference key="3">
    <citation type="journal article" date="2000" name="Science">
        <title>The genome sequence of Drosophila melanogaster.</title>
        <authorList>
            <person name="Adams M.D."/>
            <person name="Celniker S.E."/>
            <person name="Holt R.A."/>
            <person name="Evans C.A."/>
            <person name="Gocayne J.D."/>
            <person name="Amanatides P.G."/>
            <person name="Scherer S.E."/>
            <person name="Li P.W."/>
            <person name="Hoskins R.A."/>
            <person name="Galle R.F."/>
            <person name="George R.A."/>
            <person name="Lewis S.E."/>
            <person name="Richards S."/>
            <person name="Ashburner M."/>
            <person name="Henderson S.N."/>
            <person name="Sutton G.G."/>
            <person name="Wortman J.R."/>
            <person name="Yandell M.D."/>
            <person name="Zhang Q."/>
            <person name="Chen L.X."/>
            <person name="Brandon R.C."/>
            <person name="Rogers Y.-H.C."/>
            <person name="Blazej R.G."/>
            <person name="Champe M."/>
            <person name="Pfeiffer B.D."/>
            <person name="Wan K.H."/>
            <person name="Doyle C."/>
            <person name="Baxter E.G."/>
            <person name="Helt G."/>
            <person name="Nelson C.R."/>
            <person name="Miklos G.L.G."/>
            <person name="Abril J.F."/>
            <person name="Agbayani A."/>
            <person name="An H.-J."/>
            <person name="Andrews-Pfannkoch C."/>
            <person name="Baldwin D."/>
            <person name="Ballew R.M."/>
            <person name="Basu A."/>
            <person name="Baxendale J."/>
            <person name="Bayraktaroglu L."/>
            <person name="Beasley E.M."/>
            <person name="Beeson K.Y."/>
            <person name="Benos P.V."/>
            <person name="Berman B.P."/>
            <person name="Bhandari D."/>
            <person name="Bolshakov S."/>
            <person name="Borkova D."/>
            <person name="Botchan M.R."/>
            <person name="Bouck J."/>
            <person name="Brokstein P."/>
            <person name="Brottier P."/>
            <person name="Burtis K.C."/>
            <person name="Busam D.A."/>
            <person name="Butler H."/>
            <person name="Cadieu E."/>
            <person name="Center A."/>
            <person name="Chandra I."/>
            <person name="Cherry J.M."/>
            <person name="Cawley S."/>
            <person name="Dahlke C."/>
            <person name="Davenport L.B."/>
            <person name="Davies P."/>
            <person name="de Pablos B."/>
            <person name="Delcher A."/>
            <person name="Deng Z."/>
            <person name="Mays A.D."/>
            <person name="Dew I."/>
            <person name="Dietz S.M."/>
            <person name="Dodson K."/>
            <person name="Doup L.E."/>
            <person name="Downes M."/>
            <person name="Dugan-Rocha S."/>
            <person name="Dunkov B.C."/>
            <person name="Dunn P."/>
            <person name="Durbin K.J."/>
            <person name="Evangelista C.C."/>
            <person name="Ferraz C."/>
            <person name="Ferriera S."/>
            <person name="Fleischmann W."/>
            <person name="Fosler C."/>
            <person name="Gabrielian A.E."/>
            <person name="Garg N.S."/>
            <person name="Gelbart W.M."/>
            <person name="Glasser K."/>
            <person name="Glodek A."/>
            <person name="Gong F."/>
            <person name="Gorrell J.H."/>
            <person name="Gu Z."/>
            <person name="Guan P."/>
            <person name="Harris M."/>
            <person name="Harris N.L."/>
            <person name="Harvey D.A."/>
            <person name="Heiman T.J."/>
            <person name="Hernandez J.R."/>
            <person name="Houck J."/>
            <person name="Hostin D."/>
            <person name="Houston K.A."/>
            <person name="Howland T.J."/>
            <person name="Wei M.-H."/>
            <person name="Ibegwam C."/>
            <person name="Jalali M."/>
            <person name="Kalush F."/>
            <person name="Karpen G.H."/>
            <person name="Ke Z."/>
            <person name="Kennison J.A."/>
            <person name="Ketchum K.A."/>
            <person name="Kimmel B.E."/>
            <person name="Kodira C.D."/>
            <person name="Kraft C.L."/>
            <person name="Kravitz S."/>
            <person name="Kulp D."/>
            <person name="Lai Z."/>
            <person name="Lasko P."/>
            <person name="Lei Y."/>
            <person name="Levitsky A.A."/>
            <person name="Li J.H."/>
            <person name="Li Z."/>
            <person name="Liang Y."/>
            <person name="Lin X."/>
            <person name="Liu X."/>
            <person name="Mattei B."/>
            <person name="McIntosh T.C."/>
            <person name="McLeod M.P."/>
            <person name="McPherson D."/>
            <person name="Merkulov G."/>
            <person name="Milshina N.V."/>
            <person name="Mobarry C."/>
            <person name="Morris J."/>
            <person name="Moshrefi A."/>
            <person name="Mount S.M."/>
            <person name="Moy M."/>
            <person name="Murphy B."/>
            <person name="Murphy L."/>
            <person name="Muzny D.M."/>
            <person name="Nelson D.L."/>
            <person name="Nelson D.R."/>
            <person name="Nelson K.A."/>
            <person name="Nixon K."/>
            <person name="Nusskern D.R."/>
            <person name="Pacleb J.M."/>
            <person name="Palazzolo M."/>
            <person name="Pittman G.S."/>
            <person name="Pan S."/>
            <person name="Pollard J."/>
            <person name="Puri V."/>
            <person name="Reese M.G."/>
            <person name="Reinert K."/>
            <person name="Remington K."/>
            <person name="Saunders R.D.C."/>
            <person name="Scheeler F."/>
            <person name="Shen H."/>
            <person name="Shue B.C."/>
            <person name="Siden-Kiamos I."/>
            <person name="Simpson M."/>
            <person name="Skupski M.P."/>
            <person name="Smith T.J."/>
            <person name="Spier E."/>
            <person name="Spradling A.C."/>
            <person name="Stapleton M."/>
            <person name="Strong R."/>
            <person name="Sun E."/>
            <person name="Svirskas R."/>
            <person name="Tector C."/>
            <person name="Turner R."/>
            <person name="Venter E."/>
            <person name="Wang A.H."/>
            <person name="Wang X."/>
            <person name="Wang Z.-Y."/>
            <person name="Wassarman D.A."/>
            <person name="Weinstock G.M."/>
            <person name="Weissenbach J."/>
            <person name="Williams S.M."/>
            <person name="Woodage T."/>
            <person name="Worley K.C."/>
            <person name="Wu D."/>
            <person name="Yang S."/>
            <person name="Yao Q.A."/>
            <person name="Ye J."/>
            <person name="Yeh R.-F."/>
            <person name="Zaveri J.S."/>
            <person name="Zhan M."/>
            <person name="Zhang G."/>
            <person name="Zhao Q."/>
            <person name="Zheng L."/>
            <person name="Zheng X.H."/>
            <person name="Zhong F.N."/>
            <person name="Zhong W."/>
            <person name="Zhou X."/>
            <person name="Zhu S.C."/>
            <person name="Zhu X."/>
            <person name="Smith H.O."/>
            <person name="Gibbs R.A."/>
            <person name="Myers E.W."/>
            <person name="Rubin G.M."/>
            <person name="Venter J.C."/>
        </authorList>
    </citation>
    <scope>NUCLEOTIDE SEQUENCE [LARGE SCALE GENOMIC DNA]</scope>
    <source>
        <strain>Berkeley</strain>
    </source>
</reference>
<reference key="4">
    <citation type="journal article" date="2002" name="Genome Biol.">
        <title>Annotation of the Drosophila melanogaster euchromatic genome: a systematic review.</title>
        <authorList>
            <person name="Misra S."/>
            <person name="Crosby M.A."/>
            <person name="Mungall C.J."/>
            <person name="Matthews B.B."/>
            <person name="Campbell K.S."/>
            <person name="Hradecky P."/>
            <person name="Huang Y."/>
            <person name="Kaminker J.S."/>
            <person name="Millburn G.H."/>
            <person name="Prochnik S.E."/>
            <person name="Smith C.D."/>
            <person name="Tupy J.L."/>
            <person name="Whitfield E.J."/>
            <person name="Bayraktaroglu L."/>
            <person name="Berman B.P."/>
            <person name="Bettencourt B.R."/>
            <person name="Celniker S.E."/>
            <person name="de Grey A.D.N.J."/>
            <person name="Drysdale R.A."/>
            <person name="Harris N.L."/>
            <person name="Richter J."/>
            <person name="Russo S."/>
            <person name="Schroeder A.J."/>
            <person name="Shu S.Q."/>
            <person name="Stapleton M."/>
            <person name="Yamada C."/>
            <person name="Ashburner M."/>
            <person name="Gelbart W.M."/>
            <person name="Rubin G.M."/>
            <person name="Lewis S.E."/>
        </authorList>
    </citation>
    <scope>GENOME REANNOTATION</scope>
    <source>
        <strain>Berkeley</strain>
    </source>
</reference>
<reference key="5">
    <citation type="submission" date="2003-02" db="EMBL/GenBank/DDBJ databases">
        <authorList>
            <person name="Stapleton M."/>
            <person name="Brokstein P."/>
            <person name="Hong L."/>
            <person name="Agbayani A."/>
            <person name="Carlson J.W."/>
            <person name="Champe M."/>
            <person name="Chavez C."/>
            <person name="Dorsett V."/>
            <person name="Dresnek D."/>
            <person name="Farfan D."/>
            <person name="Frise E."/>
            <person name="George R.A."/>
            <person name="Gonzalez M."/>
            <person name="Guarin H."/>
            <person name="Kronmiller B."/>
            <person name="Li P.W."/>
            <person name="Liao G."/>
            <person name="Miranda A."/>
            <person name="Mungall C.J."/>
            <person name="Nunoo J."/>
            <person name="Pacleb J.M."/>
            <person name="Paragas V."/>
            <person name="Park S."/>
            <person name="Patel S."/>
            <person name="Phouanenavong S."/>
            <person name="Wan K.H."/>
            <person name="Yu C."/>
            <person name="Lewis S.E."/>
            <person name="Rubin G.M."/>
            <person name="Celniker S.E."/>
        </authorList>
    </citation>
    <scope>NUCLEOTIDE SEQUENCE [LARGE SCALE MRNA]</scope>
    <source>
        <strain>Berkeley</strain>
        <tissue>Head</tissue>
    </source>
</reference>
<reference key="6">
    <citation type="journal article" date="1997" name="J. Biol. Chem.">
        <title>Replication factor C interacts with the C-terminal side of proliferating cell nuclear antigen.</title>
        <authorList>
            <person name="Mossi R."/>
            <person name="Jonsson Z.O."/>
            <person name="Allen B.L."/>
            <person name="Hardin S.H."/>
            <person name="Huebscher U."/>
        </authorList>
    </citation>
    <scope>INTERACTION WITH PCNA</scope>
</reference>
<reference key="7">
    <citation type="journal article" date="2008" name="J. Proteome Res.">
        <title>Phosphoproteome analysis of Drosophila melanogaster embryos.</title>
        <authorList>
            <person name="Zhai B."/>
            <person name="Villen J."/>
            <person name="Beausoleil S.A."/>
            <person name="Mintseris J."/>
            <person name="Gygi S.P."/>
        </authorList>
    </citation>
    <scope>PHOSPHORYLATION [LARGE SCALE ANALYSIS] AT SER-18; SER-28; SER-40; SER-41; SER-48; SER-58; THR-60; SER-62; SER-63; THR-71; SER-128; SER-137; SER-149; SER-154; SER-156; SER-164; SER-194; THR-197; SER-938 AND SER-939</scope>
    <scope>IDENTIFICATION BY MASS SPECTROMETRY</scope>
    <source>
        <tissue>Embryo</tissue>
    </source>
</reference>
<name>RFC1_DROME</name>
<gene>
    <name type="primary">Gnf1</name>
    <name type="ORF">CG1119</name>
</gene>
<organism>
    <name type="scientific">Drosophila melanogaster</name>
    <name type="common">Fruit fly</name>
    <dbReference type="NCBI Taxonomy" id="7227"/>
    <lineage>
        <taxon>Eukaryota</taxon>
        <taxon>Metazoa</taxon>
        <taxon>Ecdysozoa</taxon>
        <taxon>Arthropoda</taxon>
        <taxon>Hexapoda</taxon>
        <taxon>Insecta</taxon>
        <taxon>Pterygota</taxon>
        <taxon>Neoptera</taxon>
        <taxon>Endopterygota</taxon>
        <taxon>Diptera</taxon>
        <taxon>Brachycera</taxon>
        <taxon>Muscomorpha</taxon>
        <taxon>Ephydroidea</taxon>
        <taxon>Drosophilidae</taxon>
        <taxon>Drosophila</taxon>
        <taxon>Sophophora</taxon>
    </lineage>
</organism>
<accession>P35600</accession>
<accession>O02031</accession>
<accession>Q8MR76</accession>
<evidence type="ECO:0000250" key="1"/>
<evidence type="ECO:0000255" key="2"/>
<evidence type="ECO:0000255" key="3">
    <source>
        <dbReference type="PROSITE-ProRule" id="PRU00033"/>
    </source>
</evidence>
<evidence type="ECO:0000256" key="4">
    <source>
        <dbReference type="SAM" id="MobiDB-lite"/>
    </source>
</evidence>
<evidence type="ECO:0000269" key="5">
    <source>
    </source>
</evidence>
<evidence type="ECO:0000269" key="6">
    <source>
    </source>
</evidence>
<evidence type="ECO:0000305" key="7"/>
<dbReference type="EMBL" id="L17340">
    <property type="protein sequence ID" value="AAA28573.1"/>
    <property type="molecule type" value="Genomic_DNA"/>
</dbReference>
<dbReference type="EMBL" id="U97685">
    <property type="protein sequence ID" value="AAB58311.1"/>
    <property type="molecule type" value="mRNA"/>
</dbReference>
<dbReference type="EMBL" id="AE014297">
    <property type="protein sequence ID" value="AAF52082.1"/>
    <property type="molecule type" value="Genomic_DNA"/>
</dbReference>
<dbReference type="EMBL" id="AE014297">
    <property type="protein sequence ID" value="AAX52937.1"/>
    <property type="molecule type" value="Genomic_DNA"/>
</dbReference>
<dbReference type="EMBL" id="AY122077">
    <property type="protein sequence ID" value="AAM52589.1"/>
    <property type="molecule type" value="mRNA"/>
</dbReference>
<dbReference type="EMBL" id="BT003618">
    <property type="protein sequence ID" value="AAO39621.1"/>
    <property type="molecule type" value="mRNA"/>
</dbReference>
<dbReference type="RefSeq" id="NP_001014605.1">
    <property type="nucleotide sequence ID" value="NM_001014605.3"/>
</dbReference>
<dbReference type="RefSeq" id="NP_524229.1">
    <property type="nucleotide sequence ID" value="NM_079505.3"/>
</dbReference>
<dbReference type="SMR" id="P35600"/>
<dbReference type="BioGRID" id="65822">
    <property type="interactions" value="29"/>
</dbReference>
<dbReference type="DIP" id="DIP-18735N"/>
<dbReference type="FunCoup" id="P35600">
    <property type="interactions" value="2270"/>
</dbReference>
<dbReference type="IntAct" id="P35600">
    <property type="interactions" value="45"/>
</dbReference>
<dbReference type="STRING" id="7227.FBpp0099511"/>
<dbReference type="iPTMnet" id="P35600"/>
<dbReference type="PaxDb" id="7227-FBpp0099511"/>
<dbReference type="EnsemblMetazoa" id="FBtr0078837">
    <property type="protein sequence ID" value="FBpp0078478"/>
    <property type="gene ID" value="FBgn0004913"/>
</dbReference>
<dbReference type="GeneID" id="40607"/>
<dbReference type="KEGG" id="dme:Dmel_CG1119"/>
<dbReference type="AGR" id="FB:FBgn0004913"/>
<dbReference type="CTD" id="100035172"/>
<dbReference type="FlyBase" id="FBgn0004913">
    <property type="gene designation" value="Gnf1"/>
</dbReference>
<dbReference type="VEuPathDB" id="VectorBase:FBgn0004913"/>
<dbReference type="eggNOG" id="KOG1968">
    <property type="taxonomic scope" value="Eukaryota"/>
</dbReference>
<dbReference type="GeneTree" id="ENSGT00730000111066"/>
<dbReference type="HOGENOM" id="CLU_003574_0_1_1"/>
<dbReference type="InParanoid" id="P35600"/>
<dbReference type="OrthoDB" id="446168at2759"/>
<dbReference type="PhylomeDB" id="P35600"/>
<dbReference type="Reactome" id="R-DME-110312">
    <property type="pathway name" value="Translesion synthesis by REV1"/>
</dbReference>
<dbReference type="Reactome" id="R-DME-110314">
    <property type="pathway name" value="Recognition of DNA damage by PCNA-containing replication complex"/>
</dbReference>
<dbReference type="Reactome" id="R-DME-110320">
    <property type="pathway name" value="Translesion Synthesis by POLH"/>
</dbReference>
<dbReference type="Reactome" id="R-DME-5651801">
    <property type="pathway name" value="PCNA-Dependent Long Patch Base Excision Repair"/>
</dbReference>
<dbReference type="Reactome" id="R-DME-5655862">
    <property type="pathway name" value="Translesion synthesis by POLK"/>
</dbReference>
<dbReference type="Reactome" id="R-DME-5656121">
    <property type="pathway name" value="Translesion synthesis by POLI"/>
</dbReference>
<dbReference type="Reactome" id="R-DME-5656169">
    <property type="pathway name" value="Termination of translesion DNA synthesis"/>
</dbReference>
<dbReference type="Reactome" id="R-DME-5696397">
    <property type="pathway name" value="Gap-filling DNA repair synthesis and ligation in GG-NER"/>
</dbReference>
<dbReference type="Reactome" id="R-DME-5696400">
    <property type="pathway name" value="Dual Incision in GG-NER"/>
</dbReference>
<dbReference type="Reactome" id="R-DME-6782135">
    <property type="pathway name" value="Dual incision in TC-NER"/>
</dbReference>
<dbReference type="Reactome" id="R-DME-6782210">
    <property type="pathway name" value="Gap-filling DNA repair synthesis and ligation in TC-NER"/>
</dbReference>
<dbReference type="Reactome" id="R-DME-69091">
    <property type="pathway name" value="Polymerase switching"/>
</dbReference>
<dbReference type="SignaLink" id="P35600"/>
<dbReference type="BioGRID-ORCS" id="40607">
    <property type="hits" value="1 hit in 1 CRISPR screen"/>
</dbReference>
<dbReference type="GenomeRNAi" id="40607"/>
<dbReference type="PRO" id="PR:P35600"/>
<dbReference type="Proteomes" id="UP000000803">
    <property type="component" value="Chromosome 3R"/>
</dbReference>
<dbReference type="Bgee" id="FBgn0004913">
    <property type="expression patterns" value="Expressed in spermatogonium in testis and 105 other cell types or tissues"/>
</dbReference>
<dbReference type="GO" id="GO:0005663">
    <property type="term" value="C:DNA replication factor C complex"/>
    <property type="evidence" value="ECO:0000303"/>
    <property type="project" value="FlyBase"/>
</dbReference>
<dbReference type="GO" id="GO:0005634">
    <property type="term" value="C:nucleus"/>
    <property type="evidence" value="ECO:0000314"/>
    <property type="project" value="FlyBase"/>
</dbReference>
<dbReference type="GO" id="GO:0005524">
    <property type="term" value="F:ATP binding"/>
    <property type="evidence" value="ECO:0007669"/>
    <property type="project" value="UniProtKB-KW"/>
</dbReference>
<dbReference type="GO" id="GO:0016887">
    <property type="term" value="F:ATP hydrolysis activity"/>
    <property type="evidence" value="ECO:0007669"/>
    <property type="project" value="InterPro"/>
</dbReference>
<dbReference type="GO" id="GO:0003677">
    <property type="term" value="F:DNA binding"/>
    <property type="evidence" value="ECO:0000314"/>
    <property type="project" value="FlyBase"/>
</dbReference>
<dbReference type="GO" id="GO:0003689">
    <property type="term" value="F:DNA clamp loader activity"/>
    <property type="evidence" value="ECO:0007669"/>
    <property type="project" value="InterPro"/>
</dbReference>
<dbReference type="GO" id="GO:0048813">
    <property type="term" value="P:dendrite morphogenesis"/>
    <property type="evidence" value="ECO:0000315"/>
    <property type="project" value="FlyBase"/>
</dbReference>
<dbReference type="GO" id="GO:0006281">
    <property type="term" value="P:DNA repair"/>
    <property type="evidence" value="ECO:0007669"/>
    <property type="project" value="InterPro"/>
</dbReference>
<dbReference type="GO" id="GO:0006260">
    <property type="term" value="P:DNA replication"/>
    <property type="evidence" value="ECO:0000303"/>
    <property type="project" value="FlyBase"/>
</dbReference>
<dbReference type="CDD" id="cd00009">
    <property type="entry name" value="AAA"/>
    <property type="match status" value="1"/>
</dbReference>
<dbReference type="CDD" id="cd17752">
    <property type="entry name" value="BRCT_RFC1"/>
    <property type="match status" value="1"/>
</dbReference>
<dbReference type="CDD" id="cd18140">
    <property type="entry name" value="HLD_clamp_RFC"/>
    <property type="match status" value="1"/>
</dbReference>
<dbReference type="FunFam" id="1.10.8.60:FF:000221">
    <property type="entry name" value="Replication factor C subunit 1"/>
    <property type="match status" value="1"/>
</dbReference>
<dbReference type="FunFam" id="1.20.272.10:FF:000005">
    <property type="entry name" value="Replication factor C subunit 1"/>
    <property type="match status" value="1"/>
</dbReference>
<dbReference type="FunFam" id="3.40.50.10190:FF:000001">
    <property type="entry name" value="Replication factor C subunit 1"/>
    <property type="match status" value="1"/>
</dbReference>
<dbReference type="FunFam" id="3.40.50.300:FF:000395">
    <property type="entry name" value="Replication factor C subunit 1"/>
    <property type="match status" value="1"/>
</dbReference>
<dbReference type="Gene3D" id="1.10.8.60">
    <property type="match status" value="1"/>
</dbReference>
<dbReference type="Gene3D" id="1.20.272.10">
    <property type="match status" value="1"/>
</dbReference>
<dbReference type="Gene3D" id="3.40.50.10190">
    <property type="entry name" value="BRCT domain"/>
    <property type="match status" value="1"/>
</dbReference>
<dbReference type="Gene3D" id="3.40.50.300">
    <property type="entry name" value="P-loop containing nucleotide triphosphate hydrolases"/>
    <property type="match status" value="1"/>
</dbReference>
<dbReference type="InterPro" id="IPR003593">
    <property type="entry name" value="AAA+_ATPase"/>
</dbReference>
<dbReference type="InterPro" id="IPR003959">
    <property type="entry name" value="ATPase_AAA_core"/>
</dbReference>
<dbReference type="InterPro" id="IPR001357">
    <property type="entry name" value="BRCT_dom"/>
</dbReference>
<dbReference type="InterPro" id="IPR036420">
    <property type="entry name" value="BRCT_dom_sf"/>
</dbReference>
<dbReference type="InterPro" id="IPR008921">
    <property type="entry name" value="DNA_pol3_clamp-load_cplx_C"/>
</dbReference>
<dbReference type="InterPro" id="IPR013725">
    <property type="entry name" value="DNA_replication_fac_RFC1_C"/>
</dbReference>
<dbReference type="InterPro" id="IPR027417">
    <property type="entry name" value="P-loop_NTPase"/>
</dbReference>
<dbReference type="InterPro" id="IPR012178">
    <property type="entry name" value="RFC1"/>
</dbReference>
<dbReference type="InterPro" id="IPR047854">
    <property type="entry name" value="RFC_lid"/>
</dbReference>
<dbReference type="PANTHER" id="PTHR23389">
    <property type="entry name" value="CHROMOSOME TRANSMISSION FIDELITY FACTOR 18"/>
    <property type="match status" value="1"/>
</dbReference>
<dbReference type="PANTHER" id="PTHR23389:SF6">
    <property type="entry name" value="REPLICATION FACTOR C SUBUNIT 1"/>
    <property type="match status" value="1"/>
</dbReference>
<dbReference type="Pfam" id="PF00004">
    <property type="entry name" value="AAA"/>
    <property type="match status" value="1"/>
</dbReference>
<dbReference type="Pfam" id="PF25361">
    <property type="entry name" value="AAA_lid_RFC1"/>
    <property type="match status" value="1"/>
</dbReference>
<dbReference type="Pfam" id="PF00533">
    <property type="entry name" value="BRCT"/>
    <property type="match status" value="1"/>
</dbReference>
<dbReference type="Pfam" id="PF08519">
    <property type="entry name" value="RFC1"/>
    <property type="match status" value="1"/>
</dbReference>
<dbReference type="PIRSF" id="PIRSF036578">
    <property type="entry name" value="RFC1"/>
    <property type="match status" value="1"/>
</dbReference>
<dbReference type="SMART" id="SM00382">
    <property type="entry name" value="AAA"/>
    <property type="match status" value="1"/>
</dbReference>
<dbReference type="SMART" id="SM00292">
    <property type="entry name" value="BRCT"/>
    <property type="match status" value="1"/>
</dbReference>
<dbReference type="SUPFAM" id="SSF52113">
    <property type="entry name" value="BRCT domain"/>
    <property type="match status" value="1"/>
</dbReference>
<dbReference type="SUPFAM" id="SSF52540">
    <property type="entry name" value="P-loop containing nucleoside triphosphate hydrolases"/>
    <property type="match status" value="1"/>
</dbReference>
<dbReference type="SUPFAM" id="SSF48019">
    <property type="entry name" value="post-AAA+ oligomerization domain-like"/>
    <property type="match status" value="1"/>
</dbReference>
<dbReference type="PROSITE" id="PS50172">
    <property type="entry name" value="BRCT"/>
    <property type="match status" value="1"/>
</dbReference>
<comment type="function">
    <text evidence="1">The elongation of primed DNA templates by DNA polymerase delta and epsilon requires the action of the accessory proteins proliferating cell nuclear antigen (PCNA) and activator 1. This subunit binds to the primer-template junction (By similarity).</text>
</comment>
<comment type="subunit">
    <text evidence="6">Interacts with C-terminus of PCNA.</text>
</comment>
<comment type="subcellular location">
    <subcellularLocation>
        <location evidence="7">Nucleus</location>
    </subcellularLocation>
</comment>
<comment type="similarity">
    <text evidence="7">Belongs to the activator 1 large subunit family.</text>
</comment>
<protein>
    <recommendedName>
        <fullName>Replication factor C subunit 1</fullName>
    </recommendedName>
    <alternativeName>
        <fullName>Activator 1 140 kDa subunit</fullName>
    </alternativeName>
    <alternativeName>
        <fullName>Activator 1 subunit 1</fullName>
    </alternativeName>
    <alternativeName>
        <fullName>Germline transcription factor 1</fullName>
    </alternativeName>
    <alternativeName>
        <fullName>Replication factor C large subunit</fullName>
    </alternativeName>
</protein>